<feature type="signal peptide" evidence="1">
    <location>
        <begin position="1"/>
        <end position="20"/>
    </location>
</feature>
<feature type="chain" id="PRO_0000023980" description="Phosphate-repressible acid phosphatase">
    <location>
        <begin position="21"/>
        <end position="436"/>
    </location>
</feature>
<feature type="glycosylation site" description="N-linked (GlcNAc...) asparagine" evidence="1">
    <location>
        <position position="227"/>
    </location>
</feature>
<feature type="glycosylation site" description="N-linked (GlcNAc...) asparagine" evidence="1">
    <location>
        <position position="283"/>
    </location>
</feature>
<feature type="glycosylation site" description="N-linked (GlcNAc...) asparagine" evidence="1">
    <location>
        <position position="304"/>
    </location>
</feature>
<evidence type="ECO:0000255" key="1"/>
<name>PPA1_ASPNG</name>
<accession>P20584</accession>
<keyword id="KW-0325">Glycoprotein</keyword>
<keyword id="KW-0378">Hydrolase</keyword>
<keyword id="KW-0732">Signal</keyword>
<proteinExistence type="inferred from homology"/>
<gene>
    <name type="primary">pacA</name>
    <name type="synonym">aphA</name>
</gene>
<reference key="1">
    <citation type="journal article" date="1988" name="Gene">
        <title>A phosphate-repressible acid phosphatase gene from Aspergillus niger: its cloning, sequencing and transcriptional analysis.</title>
        <authorList>
            <person name="Macrae W.D."/>
            <person name="Buxton F.P."/>
            <person name="Sibley S."/>
            <person name="Garven S."/>
            <person name="Gwynne D.I."/>
            <person name="Davies R.W."/>
            <person name="Arst H.N. Jr."/>
        </authorList>
    </citation>
    <scope>NUCLEOTIDE SEQUENCE [GENOMIC DNA]</scope>
    <source>
        <strain>ATCC 46951</strain>
    </source>
</reference>
<organism>
    <name type="scientific">Aspergillus niger</name>
    <dbReference type="NCBI Taxonomy" id="5061"/>
    <lineage>
        <taxon>Eukaryota</taxon>
        <taxon>Fungi</taxon>
        <taxon>Dikarya</taxon>
        <taxon>Ascomycota</taxon>
        <taxon>Pezizomycotina</taxon>
        <taxon>Eurotiomycetes</taxon>
        <taxon>Eurotiomycetidae</taxon>
        <taxon>Eurotiales</taxon>
        <taxon>Aspergillaceae</taxon>
        <taxon>Aspergillus</taxon>
        <taxon>Aspergillus subgen. Circumdati</taxon>
    </lineage>
</organism>
<comment type="catalytic activity">
    <reaction>
        <text>a phosphate monoester + H2O = an alcohol + phosphate</text>
        <dbReference type="Rhea" id="RHEA:15017"/>
        <dbReference type="ChEBI" id="CHEBI:15377"/>
        <dbReference type="ChEBI" id="CHEBI:30879"/>
        <dbReference type="ChEBI" id="CHEBI:43474"/>
        <dbReference type="ChEBI" id="CHEBI:67140"/>
        <dbReference type="EC" id="3.1.3.2"/>
    </reaction>
</comment>
<comment type="subunit">
    <text>Monomer.</text>
</comment>
<sequence length="436" mass="47995">MKGTAASALLIALSATAAQARPVVDERFPYTGPAVPIGDWVDPTINGNGKGFPRLVEPPAVKPATANPRNNVNVISLSYIPKGMHIHYQTPFGLGQLPAVRWGKDPRNLKQHGAGLLSHFQDWSSGRSPGIVQRRRAERHGLHQRSRNTQAAGQGCPMRELPFAWPTEVTISYADELGIILVPTTGRSATTAPVLLFRVAYSGRVQEALARGEIPDQGEVVANRRRNFTAYQHPFRMPGPETGGVGNFWYSFDYGLAHFVSIDGETDFANSPEWNFAEDVTGNETLPSEAETFITDSGPFGNVNGSVHETKSYEQWHLAEAGSGEGRPQQDPVGLRHEPPPYVQFRLFLYQLHVREAFEGLLLSMAWMLTSLGDVCPFFKLVHHPLTLSSATSTGTSSLSSRATAPSILPPCEQQHLLCPQRQVHHPHHQRHGRQH</sequence>
<dbReference type="EC" id="3.1.3.2"/>
<dbReference type="EMBL" id="M23540">
    <property type="protein sequence ID" value="AAA32700.1"/>
    <property type="molecule type" value="Genomic_DNA"/>
</dbReference>
<dbReference type="PIR" id="JT0386">
    <property type="entry name" value="JT0386"/>
</dbReference>
<dbReference type="GlyCosmos" id="P20584">
    <property type="glycosylation" value="3 sites, No reported glycans"/>
</dbReference>
<dbReference type="VEuPathDB" id="FungiDB:An13g01750"/>
<dbReference type="VEuPathDB" id="FungiDB:ASPNIDRAFT2_1181574"/>
<dbReference type="VEuPathDB" id="FungiDB:ATCC64974_24940"/>
<dbReference type="VEuPathDB" id="FungiDB:M747DRAFT_367247"/>
<dbReference type="GO" id="GO:0003993">
    <property type="term" value="F:acid phosphatase activity"/>
    <property type="evidence" value="ECO:0007669"/>
    <property type="project" value="UniProtKB-EC"/>
</dbReference>
<dbReference type="GO" id="GO:0046872">
    <property type="term" value="F:metal ion binding"/>
    <property type="evidence" value="ECO:0007669"/>
    <property type="project" value="InterPro"/>
</dbReference>
<dbReference type="Gene3D" id="3.60.21.10">
    <property type="match status" value="1"/>
</dbReference>
<dbReference type="InterPro" id="IPR014390">
    <property type="entry name" value="Acid_Pase_Asper"/>
</dbReference>
<dbReference type="InterPro" id="IPR029052">
    <property type="entry name" value="Metallo-depent_PP-like"/>
</dbReference>
<dbReference type="InterPro" id="IPR008963">
    <property type="entry name" value="Purple_acid_Pase-like_N"/>
</dbReference>
<dbReference type="PIRSF" id="PIRSF000900">
    <property type="entry name" value="Acid_Ptase_Asper"/>
    <property type="match status" value="1"/>
</dbReference>
<dbReference type="SUPFAM" id="SSF56300">
    <property type="entry name" value="Metallo-dependent phosphatases"/>
    <property type="match status" value="1"/>
</dbReference>
<dbReference type="SUPFAM" id="SSF49363">
    <property type="entry name" value="Purple acid phosphatase, N-terminal domain"/>
    <property type="match status" value="1"/>
</dbReference>
<protein>
    <recommendedName>
        <fullName>Phosphate-repressible acid phosphatase</fullName>
        <ecNumber>3.1.3.2</ecNumber>
    </recommendedName>
    <alternativeName>
        <fullName>Acid phosphatase PII</fullName>
    </alternativeName>
</protein>